<reference key="1">
    <citation type="journal article" date="1998" name="Nature">
        <title>Deciphering the biology of Mycobacterium tuberculosis from the complete genome sequence.</title>
        <authorList>
            <person name="Cole S.T."/>
            <person name="Brosch R."/>
            <person name="Parkhill J."/>
            <person name="Garnier T."/>
            <person name="Churcher C.M."/>
            <person name="Harris D.E."/>
            <person name="Gordon S.V."/>
            <person name="Eiglmeier K."/>
            <person name="Gas S."/>
            <person name="Barry C.E. III"/>
            <person name="Tekaia F."/>
            <person name="Badcock K."/>
            <person name="Basham D."/>
            <person name="Brown D."/>
            <person name="Chillingworth T."/>
            <person name="Connor R."/>
            <person name="Davies R.M."/>
            <person name="Devlin K."/>
            <person name="Feltwell T."/>
            <person name="Gentles S."/>
            <person name="Hamlin N."/>
            <person name="Holroyd S."/>
            <person name="Hornsby T."/>
            <person name="Jagels K."/>
            <person name="Krogh A."/>
            <person name="McLean J."/>
            <person name="Moule S."/>
            <person name="Murphy L.D."/>
            <person name="Oliver S."/>
            <person name="Osborne J."/>
            <person name="Quail M.A."/>
            <person name="Rajandream M.A."/>
            <person name="Rogers J."/>
            <person name="Rutter S."/>
            <person name="Seeger K."/>
            <person name="Skelton S."/>
            <person name="Squares S."/>
            <person name="Squares R."/>
            <person name="Sulston J.E."/>
            <person name="Taylor K."/>
            <person name="Whitehead S."/>
            <person name="Barrell B.G."/>
        </authorList>
    </citation>
    <scope>NUCLEOTIDE SEQUENCE [LARGE SCALE GENOMIC DNA]</scope>
    <source>
        <strain>ATCC 25618 / H37Rv</strain>
    </source>
</reference>
<reference key="2">
    <citation type="journal article" date="2005" name="Nucleic Acids Res.">
        <title>Toxin-antitoxin loci are highly abundant in free-living but lost from host-associated prokaryotes.</title>
        <authorList>
            <person name="Pandey D.P."/>
            <person name="Gerdes K."/>
        </authorList>
    </citation>
    <scope>POSSIBLE FUNCTION</scope>
    <source>
        <strain>ATCC 25618 / H37Rv</strain>
    </source>
</reference>
<reference key="3">
    <citation type="journal article" date="2009" name="FEMS Microbiol. Lett.">
        <title>Killing activity and rescue function of genome-wide toxin-antitoxin loci of Mycobacterium tuberculosis.</title>
        <authorList>
            <person name="Gupta A."/>
        </authorList>
    </citation>
    <scope>EXPRESSION IN E.COLI</scope>
    <scope>FUNCTION AS A TOXIN</scope>
    <source>
        <strain>ATCC 25618 / H37Rv</strain>
    </source>
</reference>
<reference key="4">
    <citation type="journal article" date="2011" name="Mol. Cell. Proteomics">
        <title>Proteogenomic analysis of Mycobacterium tuberculosis by high resolution mass spectrometry.</title>
        <authorList>
            <person name="Kelkar D.S."/>
            <person name="Kumar D."/>
            <person name="Kumar P."/>
            <person name="Balakrishnan L."/>
            <person name="Muthusamy B."/>
            <person name="Yadav A.K."/>
            <person name="Shrivastava P."/>
            <person name="Marimuthu A."/>
            <person name="Anand S."/>
            <person name="Sundaram H."/>
            <person name="Kingsbury R."/>
            <person name="Harsha H.C."/>
            <person name="Nair B."/>
            <person name="Prasad T.S."/>
            <person name="Chauhan D.S."/>
            <person name="Katoch K."/>
            <person name="Katoch V.M."/>
            <person name="Kumar P."/>
            <person name="Chaerkady R."/>
            <person name="Ramachandran S."/>
            <person name="Dash D."/>
            <person name="Pandey A."/>
        </authorList>
    </citation>
    <scope>IDENTIFICATION BY MASS SPECTROMETRY [LARGE SCALE ANALYSIS]</scope>
    <source>
        <strain>ATCC 25618 / H37Rv</strain>
    </source>
</reference>
<reference key="5">
    <citation type="journal article" date="2012" name="J. Biol. Chem.">
        <title>Growth and translation inhibition through sequence-specific RNA binding by Mycobacterium tuberculosis VapC toxin.</title>
        <authorList>
            <person name="Sharp J.D."/>
            <person name="Cruz J.W."/>
            <person name="Raman S."/>
            <person name="Inouye M."/>
            <person name="Husson R.N."/>
            <person name="Woychik N.A."/>
        </authorList>
    </citation>
    <scope>FUNCTION AS A TOXIN</scope>
    <scope>FUNCTION AS A RIBONUCLEASE</scope>
    <scope>RNA-BINDING</scope>
    <scope>INTERACTION WITH VAPB4</scope>
    <scope>MUTAGENESIS OF ASP-9; GLU-40; ASP-98; THR-114 AND ASP-116</scope>
    <source>
        <strain>ATCC 25618 / H37Rv</strain>
    </source>
</reference>
<reference key="6">
    <citation type="journal article" date="2013" name="Mol. Cell. Proteomics">
        <title>Proteomic profiling of Mycobacterium tuberculosis identifies nutrient-starvation-responsive toxin-antitoxin systems.</title>
        <authorList>
            <person name="Albrethsen J."/>
            <person name="Agner J."/>
            <person name="Piersma S.R."/>
            <person name="Hoejrup P."/>
            <person name="Pham T.V."/>
            <person name="Weldingh K."/>
            <person name="Jimenez C.R."/>
            <person name="Andersen P."/>
            <person name="Rosenkrands I."/>
        </authorList>
    </citation>
    <scope>IDENTIFICATION BY MASS SPECTROMETRY</scope>
    <scope>SUBCELLULAR LOCATION</scope>
    <source>
        <strain>ATCC 27294 / TMC 102 / H37Rv</strain>
    </source>
</reference>
<reference key="7">
    <citation type="journal article" date="2015" name="J. Bacteriol.">
        <title>Structure-function analysis of VapB4 antitoxin identifies critical features of a minimal VapC4 toxin-binding module.</title>
        <authorList>
            <person name="Jin G."/>
            <person name="Pavelka M.S. Jr."/>
            <person name="Butler J.S."/>
        </authorList>
    </citation>
    <scope>FUNCTION</scope>
    <scope>INTERACTION WITH VAPB4</scope>
    <source>
        <strain>H37Rv</strain>
    </source>
</reference>
<name>VAPC4_MYCTU</name>
<sequence length="130" mass="14112">MNVRRALADTSVFIGIEATRFDPDRFAGYEWGVSVVTLGELRLGVLQASGPEAAARRLSTYQLAQRFEPLGIDEAVSEAWALLVSKLRAAKLRVPINDSWIAATAVAHGIAILTQDNDYAAMPDVEVITI</sequence>
<dbReference type="EC" id="3.1.-.-"/>
<dbReference type="EMBL" id="AL123456">
    <property type="protein sequence ID" value="CCP43334.1"/>
    <property type="molecule type" value="Genomic_DNA"/>
</dbReference>
<dbReference type="PIR" id="F70908">
    <property type="entry name" value="F70908"/>
</dbReference>
<dbReference type="RefSeq" id="NP_215109.1">
    <property type="nucleotide sequence ID" value="NC_000962.3"/>
</dbReference>
<dbReference type="RefSeq" id="WP_003403122.1">
    <property type="nucleotide sequence ID" value="NZ_NVQJ01000033.1"/>
</dbReference>
<dbReference type="SMR" id="O07783"/>
<dbReference type="STRING" id="83332.Rv0595c"/>
<dbReference type="PaxDb" id="83332-Rv0595c"/>
<dbReference type="DNASU" id="887835"/>
<dbReference type="GeneID" id="887835"/>
<dbReference type="KEGG" id="mtu:Rv0595c"/>
<dbReference type="KEGG" id="mtv:RVBD_0595c"/>
<dbReference type="TubercuList" id="Rv0595c"/>
<dbReference type="eggNOG" id="COG1487">
    <property type="taxonomic scope" value="Bacteria"/>
</dbReference>
<dbReference type="InParanoid" id="O07783"/>
<dbReference type="OrthoDB" id="9799448at2"/>
<dbReference type="PhylomeDB" id="O07783"/>
<dbReference type="Proteomes" id="UP000001584">
    <property type="component" value="Chromosome"/>
</dbReference>
<dbReference type="GO" id="GO:0005576">
    <property type="term" value="C:extracellular region"/>
    <property type="evidence" value="ECO:0007669"/>
    <property type="project" value="UniProtKB-SubCell"/>
</dbReference>
<dbReference type="GO" id="GO:0000287">
    <property type="term" value="F:magnesium ion binding"/>
    <property type="evidence" value="ECO:0007669"/>
    <property type="project" value="UniProtKB-UniRule"/>
</dbReference>
<dbReference type="GO" id="GO:0003723">
    <property type="term" value="F:RNA binding"/>
    <property type="evidence" value="ECO:0007669"/>
    <property type="project" value="UniProtKB-KW"/>
</dbReference>
<dbReference type="GO" id="GO:0004521">
    <property type="term" value="F:RNA endonuclease activity"/>
    <property type="evidence" value="ECO:0000318"/>
    <property type="project" value="GO_Central"/>
</dbReference>
<dbReference type="GO" id="GO:0097351">
    <property type="term" value="F:toxin sequestering activity"/>
    <property type="evidence" value="ECO:0000353"/>
    <property type="project" value="MTBBASE"/>
</dbReference>
<dbReference type="GO" id="GO:0044003">
    <property type="term" value="P:symbiont-mediated perturbation of host process"/>
    <property type="evidence" value="ECO:0000315"/>
    <property type="project" value="MTBBASE"/>
</dbReference>
<dbReference type="CDD" id="cd18768">
    <property type="entry name" value="PIN_MtVapC4-C5-like"/>
    <property type="match status" value="1"/>
</dbReference>
<dbReference type="Gene3D" id="3.40.50.1010">
    <property type="entry name" value="5'-nuclease"/>
    <property type="match status" value="1"/>
</dbReference>
<dbReference type="HAMAP" id="MF_00265">
    <property type="entry name" value="VapC_Nob1"/>
    <property type="match status" value="1"/>
</dbReference>
<dbReference type="InterPro" id="IPR029060">
    <property type="entry name" value="PIN-like_dom_sf"/>
</dbReference>
<dbReference type="InterPro" id="IPR002716">
    <property type="entry name" value="PIN_dom"/>
</dbReference>
<dbReference type="InterPro" id="IPR050556">
    <property type="entry name" value="Type_II_TA_system_RNase"/>
</dbReference>
<dbReference type="InterPro" id="IPR022907">
    <property type="entry name" value="VapC_family"/>
</dbReference>
<dbReference type="PANTHER" id="PTHR33653">
    <property type="entry name" value="RIBONUCLEASE VAPC2"/>
    <property type="match status" value="1"/>
</dbReference>
<dbReference type="PANTHER" id="PTHR33653:SF1">
    <property type="entry name" value="RIBONUCLEASE VAPC2"/>
    <property type="match status" value="1"/>
</dbReference>
<dbReference type="Pfam" id="PF01850">
    <property type="entry name" value="PIN"/>
    <property type="match status" value="1"/>
</dbReference>
<dbReference type="SUPFAM" id="SSF88723">
    <property type="entry name" value="PIN domain-like"/>
    <property type="match status" value="1"/>
</dbReference>
<gene>
    <name evidence="1" type="primary">vapC4</name>
    <name type="ordered locus">Rv0595c</name>
</gene>
<keyword id="KW-0378">Hydrolase</keyword>
<keyword id="KW-0460">Magnesium</keyword>
<keyword id="KW-0479">Metal-binding</keyword>
<keyword id="KW-0540">Nuclease</keyword>
<keyword id="KW-1185">Reference proteome</keyword>
<keyword id="KW-0694">RNA-binding</keyword>
<keyword id="KW-0964">Secreted</keyword>
<keyword id="KW-1277">Toxin-antitoxin system</keyword>
<accession>O07783</accession>
<accession>L0T5U5</accession>
<evidence type="ECO:0000255" key="1">
    <source>
        <dbReference type="HAMAP-Rule" id="MF_00265"/>
    </source>
</evidence>
<evidence type="ECO:0000269" key="2">
    <source>
    </source>
</evidence>
<evidence type="ECO:0000269" key="3">
    <source>
    </source>
</evidence>
<evidence type="ECO:0000269" key="4">
    <source>
    </source>
</evidence>
<evidence type="ECO:0000269" key="5">
    <source>
    </source>
</evidence>
<protein>
    <recommendedName>
        <fullName evidence="1">Ribonuclease VapC4</fullName>
        <shortName evidence="1">RNase VapC4</shortName>
        <ecNumber>3.1.-.-</ecNumber>
    </recommendedName>
    <alternativeName>
        <fullName evidence="1">Toxin VapC4</fullName>
    </alternativeName>
    <alternativeName>
        <fullName>VapC-mt4</fullName>
    </alternativeName>
</protein>
<proteinExistence type="evidence at protein level"/>
<comment type="function">
    <text evidence="2 3 5">Toxic component of a type II toxin-antitoxin (TA) system. Probably exerts its toxic effect by binding to mRNA, inhibiting translation. Binds to, recognizes and cleaves ssRNA at ACGC and AC(A/U)GC sequences, usually between the G and C; cleavage is not very efficient, nor is cleavage required to inhibit protein synthesis. Upon expression in situ, in M.smegmatis or E.coli inhibits cell growth and colony formation; in at least E.coli also causes increased levels of cellular RNA. Its toxic effect is neutralized by coexpression with cognate antitoxin VapB4.</text>
</comment>
<comment type="cofactor">
    <cofactor evidence="1">
        <name>Mg(2+)</name>
        <dbReference type="ChEBI" id="CHEBI:18420"/>
    </cofactor>
</comment>
<comment type="subunit">
    <text evidence="3">Interacts with cognate antitoxin VapB4.</text>
</comment>
<comment type="subcellular location">
    <subcellularLocation>
        <location>Secreted</location>
    </subcellularLocation>
    <text evidence="4">Following 6 weeks of nutrient starvation.</text>
</comment>
<comment type="similarity">
    <text evidence="1">Belongs to the PINc/VapC protein family.</text>
</comment>
<organism>
    <name type="scientific">Mycobacterium tuberculosis (strain ATCC 25618 / H37Rv)</name>
    <dbReference type="NCBI Taxonomy" id="83332"/>
    <lineage>
        <taxon>Bacteria</taxon>
        <taxon>Bacillati</taxon>
        <taxon>Actinomycetota</taxon>
        <taxon>Actinomycetes</taxon>
        <taxon>Mycobacteriales</taxon>
        <taxon>Mycobacteriaceae</taxon>
        <taxon>Mycobacterium</taxon>
        <taxon>Mycobacterium tuberculosis complex</taxon>
    </lineage>
</organism>
<feature type="chain" id="PRO_0000407867" description="Ribonuclease VapC4">
    <location>
        <begin position="1"/>
        <end position="130"/>
    </location>
</feature>
<feature type="domain" description="PINc" evidence="1">
    <location>
        <begin position="7"/>
        <end position="130"/>
    </location>
</feature>
<feature type="binding site" evidence="1">
    <location>
        <position position="9"/>
    </location>
    <ligand>
        <name>Mg(2+)</name>
        <dbReference type="ChEBI" id="CHEBI:18420"/>
    </ligand>
</feature>
<feature type="binding site" evidence="1">
    <location>
        <position position="98"/>
    </location>
    <ligand>
        <name>Mg(2+)</name>
        <dbReference type="ChEBI" id="CHEBI:18420"/>
    </ligand>
</feature>
<feature type="mutagenesis site" description="Does not inhibit growth, forms complex with VapB4." evidence="3">
    <original>D</original>
    <variation>A</variation>
    <location>
        <position position="9"/>
    </location>
</feature>
<feature type="mutagenesis site" description="Does not inhibit growth, forms complex with VapB4." evidence="3">
    <original>E</original>
    <variation>A</variation>
    <location>
        <position position="40"/>
    </location>
</feature>
<feature type="mutagenesis site" description="Does not inhibit growth, forms complex with VapB4." evidence="3">
    <original>D</original>
    <variation>A</variation>
    <location>
        <position position="98"/>
    </location>
</feature>
<feature type="mutagenesis site" description="Does not inhibit growth, forms complex with VapB4." evidence="3">
    <original>T</original>
    <variation>A</variation>
    <location>
        <position position="114"/>
    </location>
</feature>
<feature type="mutagenesis site" description="Does not inhibit growth, forms complex with VapB4." evidence="3">
    <original>D</original>
    <variation>A</variation>
    <location>
        <position position="116"/>
    </location>
</feature>